<proteinExistence type="inferred from homology"/>
<gene>
    <name evidence="2" type="primary">trmB</name>
    <name type="ordered locus">BruAb1_2134</name>
</gene>
<keyword id="KW-0489">Methyltransferase</keyword>
<keyword id="KW-0949">S-adenosyl-L-methionine</keyword>
<keyword id="KW-0808">Transferase</keyword>
<keyword id="KW-0819">tRNA processing</keyword>
<feature type="chain" id="PRO_0000229155" description="tRNA (guanine-N(7)-)-methyltransferase">
    <location>
        <begin position="1"/>
        <end position="233"/>
    </location>
</feature>
<feature type="region of interest" description="Disordered" evidence="3">
    <location>
        <begin position="1"/>
        <end position="22"/>
    </location>
</feature>
<feature type="active site" evidence="1">
    <location>
        <position position="138"/>
    </location>
</feature>
<feature type="binding site" evidence="2">
    <location>
        <position position="64"/>
    </location>
    <ligand>
        <name>S-adenosyl-L-methionine</name>
        <dbReference type="ChEBI" id="CHEBI:59789"/>
    </ligand>
</feature>
<feature type="binding site" evidence="2">
    <location>
        <position position="89"/>
    </location>
    <ligand>
        <name>S-adenosyl-L-methionine</name>
        <dbReference type="ChEBI" id="CHEBI:59789"/>
    </ligand>
</feature>
<feature type="binding site" evidence="2">
    <location>
        <position position="116"/>
    </location>
    <ligand>
        <name>S-adenosyl-L-methionine</name>
        <dbReference type="ChEBI" id="CHEBI:59789"/>
    </ligand>
</feature>
<feature type="binding site" evidence="2">
    <location>
        <position position="138"/>
    </location>
    <ligand>
        <name>S-adenosyl-L-methionine</name>
        <dbReference type="ChEBI" id="CHEBI:59789"/>
    </ligand>
</feature>
<feature type="binding site" evidence="2">
    <location>
        <position position="142"/>
    </location>
    <ligand>
        <name>substrate</name>
    </ligand>
</feature>
<feature type="binding site" evidence="2">
    <location>
        <position position="174"/>
    </location>
    <ligand>
        <name>substrate</name>
    </ligand>
</feature>
<feature type="binding site" evidence="2">
    <location>
        <begin position="212"/>
        <end position="215"/>
    </location>
    <ligand>
        <name>substrate</name>
    </ligand>
</feature>
<reference key="1">
    <citation type="journal article" date="2005" name="J. Bacteriol.">
        <title>Completion of the genome sequence of Brucella abortus and comparison to the highly similar genomes of Brucella melitensis and Brucella suis.</title>
        <authorList>
            <person name="Halling S.M."/>
            <person name="Peterson-Burch B.D."/>
            <person name="Bricker B.J."/>
            <person name="Zuerner R.L."/>
            <person name="Qing Z."/>
            <person name="Li L.-L."/>
            <person name="Kapur V."/>
            <person name="Alt D.P."/>
            <person name="Olsen S.C."/>
        </authorList>
    </citation>
    <scope>NUCLEOTIDE SEQUENCE [LARGE SCALE GENOMIC DNA]</scope>
    <source>
        <strain>9-941</strain>
    </source>
</reference>
<accession>Q57AA4</accession>
<protein>
    <recommendedName>
        <fullName evidence="2">tRNA (guanine-N(7)-)-methyltransferase</fullName>
        <ecNumber evidence="2">2.1.1.33</ecNumber>
    </recommendedName>
    <alternativeName>
        <fullName evidence="2">tRNA (guanine(46)-N(7))-methyltransferase</fullName>
    </alternativeName>
    <alternativeName>
        <fullName evidence="2">tRNA(m7G46)-methyltransferase</fullName>
    </alternativeName>
</protein>
<dbReference type="EC" id="2.1.1.33" evidence="2"/>
<dbReference type="EMBL" id="AE017223">
    <property type="protein sequence ID" value="AAX75430.1"/>
    <property type="molecule type" value="Genomic_DNA"/>
</dbReference>
<dbReference type="RefSeq" id="WP_002965223.1">
    <property type="nucleotide sequence ID" value="NC_006932.1"/>
</dbReference>
<dbReference type="SMR" id="Q57AA4"/>
<dbReference type="EnsemblBacteria" id="AAX75430">
    <property type="protein sequence ID" value="AAX75430"/>
    <property type="gene ID" value="BruAb1_2134"/>
</dbReference>
<dbReference type="KEGG" id="bmb:BruAb1_2134"/>
<dbReference type="HOGENOM" id="CLU_050910_0_3_5"/>
<dbReference type="UniPathway" id="UPA00989"/>
<dbReference type="Proteomes" id="UP000000540">
    <property type="component" value="Chromosome I"/>
</dbReference>
<dbReference type="GO" id="GO:0043527">
    <property type="term" value="C:tRNA methyltransferase complex"/>
    <property type="evidence" value="ECO:0007669"/>
    <property type="project" value="TreeGrafter"/>
</dbReference>
<dbReference type="GO" id="GO:0008176">
    <property type="term" value="F:tRNA (guanine(46)-N7)-methyltransferase activity"/>
    <property type="evidence" value="ECO:0007669"/>
    <property type="project" value="UniProtKB-UniRule"/>
</dbReference>
<dbReference type="Gene3D" id="3.40.50.150">
    <property type="entry name" value="Vaccinia Virus protein VP39"/>
    <property type="match status" value="1"/>
</dbReference>
<dbReference type="HAMAP" id="MF_01057">
    <property type="entry name" value="tRNA_methyltr_TrmB"/>
    <property type="match status" value="1"/>
</dbReference>
<dbReference type="InterPro" id="IPR029063">
    <property type="entry name" value="SAM-dependent_MTases_sf"/>
</dbReference>
<dbReference type="InterPro" id="IPR003358">
    <property type="entry name" value="tRNA_(Gua-N-7)_MeTrfase_Trmb"/>
</dbReference>
<dbReference type="InterPro" id="IPR055361">
    <property type="entry name" value="tRNA_methyltr_TrmB_bact"/>
</dbReference>
<dbReference type="PANTHER" id="PTHR23417">
    <property type="entry name" value="3-DEOXY-D-MANNO-OCTULOSONIC-ACID TRANSFERASE/TRNA GUANINE-N 7 - -METHYLTRANSFERASE"/>
    <property type="match status" value="1"/>
</dbReference>
<dbReference type="PANTHER" id="PTHR23417:SF14">
    <property type="entry name" value="PENTACOTRIPEPTIDE-REPEAT REGION OF PRORP DOMAIN-CONTAINING PROTEIN"/>
    <property type="match status" value="1"/>
</dbReference>
<dbReference type="Pfam" id="PF02390">
    <property type="entry name" value="Methyltransf_4"/>
    <property type="match status" value="1"/>
</dbReference>
<dbReference type="SUPFAM" id="SSF53335">
    <property type="entry name" value="S-adenosyl-L-methionine-dependent methyltransferases"/>
    <property type="match status" value="1"/>
</dbReference>
<dbReference type="PROSITE" id="PS51625">
    <property type="entry name" value="SAM_MT_TRMB"/>
    <property type="match status" value="1"/>
</dbReference>
<organism>
    <name type="scientific">Brucella abortus biovar 1 (strain 9-941)</name>
    <dbReference type="NCBI Taxonomy" id="262698"/>
    <lineage>
        <taxon>Bacteria</taxon>
        <taxon>Pseudomonadati</taxon>
        <taxon>Pseudomonadota</taxon>
        <taxon>Alphaproteobacteria</taxon>
        <taxon>Hyphomicrobiales</taxon>
        <taxon>Brucellaceae</taxon>
        <taxon>Brucella/Ochrobactrum group</taxon>
        <taxon>Brucella</taxon>
    </lineage>
</organism>
<name>TRMB_BRUAB</name>
<evidence type="ECO:0000250" key="1"/>
<evidence type="ECO:0000255" key="2">
    <source>
        <dbReference type="HAMAP-Rule" id="MF_01057"/>
    </source>
</evidence>
<evidence type="ECO:0000256" key="3">
    <source>
        <dbReference type="SAM" id="MobiDB-lite"/>
    </source>
</evidence>
<sequence>MIDENHPMRAAGNFFGRRHGKPLRPHQSNLFEDLLPRLKLDLATPAPQDLRSLFEAPVETVRMEIGFGGGEHLHHESGRYPQSGFIGVEPFINGMAKMLAALDQAPRPNLRLYDEDATAVLDWLPDASLAGIDLFYPDPWHKRRHWKRRFVSDANLDRFARVLKPGAKFRFASDIEHYVNWTLQHCRRHAAFDWQAESPADWNDAYEGWPGTRYEAKAFHEGRRAAYLTFIRR</sequence>
<comment type="function">
    <text evidence="2">Catalyzes the formation of N(7)-methylguanine at position 46 (m7G46) in tRNA.</text>
</comment>
<comment type="catalytic activity">
    <reaction evidence="2">
        <text>guanosine(46) in tRNA + S-adenosyl-L-methionine = N(7)-methylguanosine(46) in tRNA + S-adenosyl-L-homocysteine</text>
        <dbReference type="Rhea" id="RHEA:42708"/>
        <dbReference type="Rhea" id="RHEA-COMP:10188"/>
        <dbReference type="Rhea" id="RHEA-COMP:10189"/>
        <dbReference type="ChEBI" id="CHEBI:57856"/>
        <dbReference type="ChEBI" id="CHEBI:59789"/>
        <dbReference type="ChEBI" id="CHEBI:74269"/>
        <dbReference type="ChEBI" id="CHEBI:74480"/>
        <dbReference type="EC" id="2.1.1.33"/>
    </reaction>
</comment>
<comment type="pathway">
    <text evidence="2">tRNA modification; N(7)-methylguanine-tRNA biosynthesis.</text>
</comment>
<comment type="similarity">
    <text evidence="2">Belongs to the class I-like SAM-binding methyltransferase superfamily. TrmB family.</text>
</comment>